<feature type="chain" id="PRO_0000456256" description="Thoeris protein ThsA">
    <location>
        <begin position="1"/>
        <end position="297"/>
    </location>
</feature>
<feature type="transmembrane region" description="Helical" evidence="2">
    <location>
        <begin position="32"/>
        <end position="52"/>
    </location>
</feature>
<feature type="transmembrane region" description="Helical" evidence="2">
    <location>
        <begin position="57"/>
        <end position="77"/>
    </location>
</feature>
<feature type="mutagenesis site" description="No longer confers resistance to phage SBSphiJ." evidence="3">
    <original>DIFEVPRNNYKVIAFN</original>
    <variation>AIFEVPRNNYKVIAFA</variation>
    <location>
        <begin position="100"/>
        <end position="115"/>
    </location>
</feature>
<organism>
    <name type="scientific">Bacillus amyloliquefaciens (strain Y2)</name>
    <name type="common">Bacillus amyloliquefaciens subsp. plantarum (strain B9601-Y2)</name>
    <dbReference type="NCBI Taxonomy" id="1155777"/>
    <lineage>
        <taxon>Bacteria</taxon>
        <taxon>Bacillati</taxon>
        <taxon>Bacillota</taxon>
        <taxon>Bacilli</taxon>
        <taxon>Bacillales</taxon>
        <taxon>Bacillaceae</taxon>
        <taxon>Bacillus</taxon>
        <taxon>Bacillus amyloliquefaciens group</taxon>
    </lineage>
</organism>
<comment type="function">
    <text evidence="1 3">Probable membrane protein component of the Thoeris antiviral defense system, composed of ThsA and ThsB. Expression of ThsA and ThsB in B.subtilis (strain BEST7003) confers resistance to phages SBSphiC, SBSphiJ and SPO1 (PubMed:29371424). Activation by a signal generated by ThsB leads to phage resistance (By similarity).</text>
</comment>
<comment type="activity regulation">
    <text evidence="1">Activated by a signal molecule generated by ThsB.</text>
</comment>
<comment type="subcellular location">
    <subcellularLocation>
        <location evidence="2">Cell membrane</location>
        <topology evidence="2">Multi-pass membrane protein</topology>
    </subcellularLocation>
</comment>
<comment type="disruption phenotype">
    <text evidence="3">When this gene is missing the Thoeris system does not confer phage resistance in B.subtilis.</text>
</comment>
<dbReference type="EMBL" id="CP003332">
    <property type="protein sequence ID" value="AFJ62119.1"/>
    <property type="molecule type" value="Genomic_DNA"/>
</dbReference>
<dbReference type="RefSeq" id="WP_014418039.1">
    <property type="nucleotide sequence ID" value="NC_017912.1"/>
</dbReference>
<dbReference type="SMR" id="I2C645"/>
<dbReference type="KEGG" id="bqy:MUS_2160"/>
<dbReference type="KEGG" id="bya:BANAU_1934"/>
<dbReference type="PATRIC" id="fig|1126211.3.peg.2074"/>
<dbReference type="HOGENOM" id="CLU_083562_0_0_9"/>
<dbReference type="Proteomes" id="UP000002878">
    <property type="component" value="Chromosome"/>
</dbReference>
<dbReference type="GO" id="GO:0005886">
    <property type="term" value="C:plasma membrane"/>
    <property type="evidence" value="ECO:0007669"/>
    <property type="project" value="UniProtKB-SubCell"/>
</dbReference>
<dbReference type="GO" id="GO:0051607">
    <property type="term" value="P:defense response to virus"/>
    <property type="evidence" value="ECO:0007669"/>
    <property type="project" value="UniProtKB-KW"/>
</dbReference>
<dbReference type="InterPro" id="IPR045535">
    <property type="entry name" value="ThsA_Macro"/>
</dbReference>
<dbReference type="Pfam" id="PF20016">
    <property type="entry name" value="ThsA_Macro"/>
    <property type="match status" value="1"/>
</dbReference>
<keyword id="KW-0051">Antiviral defense</keyword>
<keyword id="KW-1003">Cell membrane</keyword>
<keyword id="KW-0472">Membrane</keyword>
<keyword id="KW-0812">Transmembrane</keyword>
<keyword id="KW-1133">Transmembrane helix</keyword>
<proteinExistence type="evidence at protein level"/>
<name>THSA_BACAY</name>
<accession>I2C645</accession>
<evidence type="ECO:0000250" key="1">
    <source>
        <dbReference type="UniProtKB" id="J8G6Z1"/>
    </source>
</evidence>
<evidence type="ECO:0000255" key="2"/>
<evidence type="ECO:0000269" key="3">
    <source>
    </source>
</evidence>
<evidence type="ECO:0000303" key="4">
    <source>
    </source>
</evidence>
<evidence type="ECO:0000312" key="5">
    <source>
        <dbReference type="EMBL" id="AFJ62119.1"/>
    </source>
</evidence>
<gene>
    <name evidence="4" type="primary">thsA</name>
    <name evidence="5" type="ORF">MUS_2160</name>
</gene>
<protein>
    <recommendedName>
        <fullName evidence="4">Thoeris protein ThsA</fullName>
    </recommendedName>
</protein>
<sequence length="297" mass="34693">MNIIGSDRNTNIGGFMWKFKELIRDKTFRRWALSIILTIPTSVSTFISFLDLDARCRLIILLILVGLSLVIIIVQFIRLLFMNNITLNLNGSEVEIKKGDIFEVPRNNYKVIAFNEYFDTQVDDVIIARETLNGQYIKRYYSHQDITELDQKIKDDVKLKIEEKNVERPFGGKTTRYSLGSVFKDMDFFLVAFSKFDRENRAQLKLNEYASCMLNVWNEINTLHASKEVFIPLLGSGITRHVDSDVGVNELLHIMLWTFQISKVKFREPAKVTILLYKNDHKKINFYKLKEFEKNGL</sequence>
<reference evidence="5" key="1">
    <citation type="journal article" date="2012" name="J. Biotechnol.">
        <title>Genome sequence of the plant growth promoting strain Bacillus amyloliquefaciens subsp. plantarum B9601-Y2 and expression of mersacidin and other secondary metabolites.</title>
        <authorList>
            <person name="He P."/>
            <person name="Hao K."/>
            <person name="Blom J."/>
            <person name="Ruckert C."/>
            <person name="Vater J."/>
            <person name="Mao Z."/>
            <person name="Wu Y."/>
            <person name="Hou M."/>
            <person name="He P."/>
            <person name="He Y."/>
            <person name="Borriss R."/>
        </authorList>
    </citation>
    <scope>NUCLEOTIDE SEQUENCE [LARGE SCALE GENOMIC DNA]</scope>
    <source>
        <strain>Y2</strain>
    </source>
</reference>
<reference key="2">
    <citation type="journal article" date="2018" name="Science">
        <title>Systematic discovery of antiphage defense systems in the microbial pangenome.</title>
        <authorList>
            <person name="Doron S."/>
            <person name="Melamed S."/>
            <person name="Ofir G."/>
            <person name="Leavitt A."/>
            <person name="Lopatina A."/>
            <person name="Keren M."/>
            <person name="Amitai G."/>
            <person name="Sorek R."/>
        </authorList>
    </citation>
    <scope>FUNCTION IN ANTIVIRAL DEFENSE</scope>
    <scope>DISRUPTION PHENOTYPE</scope>
    <scope>MUTAGENESIS OF 100-ASP--ASN-115</scope>
    <scope>EXPRESSION IN B.SUBTILIS</scope>
    <source>
        <strain>Y2</strain>
    </source>
</reference>